<accession>Q5A651</accession>
<accession>A0A1D8PM25</accession>
<dbReference type="EC" id="3.4.23.24" evidence="8"/>
<dbReference type="EMBL" id="CP017626">
    <property type="protein sequence ID" value="AOW29196.1"/>
    <property type="molecule type" value="Genomic_DNA"/>
</dbReference>
<dbReference type="RefSeq" id="XP_717243.1">
    <property type="nucleotide sequence ID" value="XM_712150.2"/>
</dbReference>
<dbReference type="SMR" id="Q5A651"/>
<dbReference type="STRING" id="237561.Q5A651"/>
<dbReference type="MEROPS" id="A01.085"/>
<dbReference type="GlyCosmos" id="Q5A651">
    <property type="glycosylation" value="8 sites, No reported glycans"/>
</dbReference>
<dbReference type="EnsemblFungi" id="C4_04470W_A-T">
    <property type="protein sequence ID" value="C4_04470W_A-T-p1"/>
    <property type="gene ID" value="C4_04470W_A"/>
</dbReference>
<dbReference type="GeneID" id="3641126"/>
<dbReference type="KEGG" id="cal:CAALFM_C404470WA"/>
<dbReference type="CGD" id="CAL0000201140">
    <property type="gene designation" value="SAP10"/>
</dbReference>
<dbReference type="VEuPathDB" id="FungiDB:C4_04470W_A"/>
<dbReference type="eggNOG" id="KOG1339">
    <property type="taxonomic scope" value="Eukaryota"/>
</dbReference>
<dbReference type="HOGENOM" id="CLU_013253_9_1_1"/>
<dbReference type="InParanoid" id="Q5A651"/>
<dbReference type="OMA" id="QCYLAIM"/>
<dbReference type="OrthoDB" id="771136at2759"/>
<dbReference type="PRO" id="PR:Q5A651"/>
<dbReference type="Proteomes" id="UP000000559">
    <property type="component" value="Chromosome 4"/>
</dbReference>
<dbReference type="GO" id="GO:0009986">
    <property type="term" value="C:cell surface"/>
    <property type="evidence" value="ECO:0000314"/>
    <property type="project" value="CGD"/>
</dbReference>
<dbReference type="GO" id="GO:0005576">
    <property type="term" value="C:extracellular region"/>
    <property type="evidence" value="ECO:0000314"/>
    <property type="project" value="CGD"/>
</dbReference>
<dbReference type="GO" id="GO:1903561">
    <property type="term" value="C:extracellular vesicle"/>
    <property type="evidence" value="ECO:0000314"/>
    <property type="project" value="CGD"/>
</dbReference>
<dbReference type="GO" id="GO:0009277">
    <property type="term" value="C:fungal-type cell wall"/>
    <property type="evidence" value="ECO:0000314"/>
    <property type="project" value="CGD"/>
</dbReference>
<dbReference type="GO" id="GO:0005886">
    <property type="term" value="C:plasma membrane"/>
    <property type="evidence" value="ECO:0000314"/>
    <property type="project" value="CGD"/>
</dbReference>
<dbReference type="GO" id="GO:0098552">
    <property type="term" value="C:side of membrane"/>
    <property type="evidence" value="ECO:0007669"/>
    <property type="project" value="UniProtKB-KW"/>
</dbReference>
<dbReference type="GO" id="GO:0004190">
    <property type="term" value="F:aspartic-type endopeptidase activity"/>
    <property type="evidence" value="ECO:0000314"/>
    <property type="project" value="CGD"/>
</dbReference>
<dbReference type="GO" id="GO:0044406">
    <property type="term" value="P:adhesion of symbiont to host"/>
    <property type="evidence" value="ECO:0000315"/>
    <property type="project" value="CGD"/>
</dbReference>
<dbReference type="GO" id="GO:0031505">
    <property type="term" value="P:fungal-type cell wall organization"/>
    <property type="evidence" value="ECO:0000315"/>
    <property type="project" value="CGD"/>
</dbReference>
<dbReference type="GO" id="GO:0006508">
    <property type="term" value="P:proteolysis"/>
    <property type="evidence" value="ECO:0000314"/>
    <property type="project" value="CGD"/>
</dbReference>
<dbReference type="CDD" id="cd05474">
    <property type="entry name" value="SAP_like"/>
    <property type="match status" value="1"/>
</dbReference>
<dbReference type="Gene3D" id="2.40.70.10">
    <property type="entry name" value="Acid Proteases"/>
    <property type="match status" value="2"/>
</dbReference>
<dbReference type="InterPro" id="IPR001461">
    <property type="entry name" value="Aspartic_peptidase_A1"/>
</dbReference>
<dbReference type="InterPro" id="IPR001969">
    <property type="entry name" value="Aspartic_peptidase_AS"/>
</dbReference>
<dbReference type="InterPro" id="IPR033121">
    <property type="entry name" value="PEPTIDASE_A1"/>
</dbReference>
<dbReference type="InterPro" id="IPR021109">
    <property type="entry name" value="Peptidase_aspartic_dom_sf"/>
</dbReference>
<dbReference type="InterPro" id="IPR033876">
    <property type="entry name" value="SAP-like"/>
</dbReference>
<dbReference type="PANTHER" id="PTHR47966:SF65">
    <property type="entry name" value="ASPARTIC-TYPE ENDOPEPTIDASE"/>
    <property type="match status" value="1"/>
</dbReference>
<dbReference type="PANTHER" id="PTHR47966">
    <property type="entry name" value="BETA-SITE APP-CLEAVING ENZYME, ISOFORM A-RELATED"/>
    <property type="match status" value="1"/>
</dbReference>
<dbReference type="Pfam" id="PF00026">
    <property type="entry name" value="Asp"/>
    <property type="match status" value="1"/>
</dbReference>
<dbReference type="PRINTS" id="PR00792">
    <property type="entry name" value="PEPSIN"/>
</dbReference>
<dbReference type="SUPFAM" id="SSF50630">
    <property type="entry name" value="Acid proteases"/>
    <property type="match status" value="1"/>
</dbReference>
<dbReference type="PROSITE" id="PS00141">
    <property type="entry name" value="ASP_PROTEASE"/>
    <property type="match status" value="1"/>
</dbReference>
<dbReference type="PROSITE" id="PS51767">
    <property type="entry name" value="PEPTIDASE_A1"/>
    <property type="match status" value="1"/>
</dbReference>
<gene>
    <name evidence="9" type="primary">SAP10</name>
    <name type="synonym">YPS3</name>
    <name type="ordered locus">CAALFM_C404470WA</name>
    <name type="ORF">CaO19.11320</name>
    <name type="ORF">CaO19.3839</name>
</gene>
<protein>
    <recommendedName>
        <fullName evidence="9">Secreted aspartic protease 10</fullName>
        <shortName evidence="10">ACP 10</shortName>
        <shortName evidence="10">Aspartate protease 10</shortName>
        <ecNumber evidence="8">3.4.23.24</ecNumber>
    </recommendedName>
    <alternativeName>
        <fullName evidence="10">Candidapepsin-10</fullName>
    </alternativeName>
</protein>
<name>CAR10_CANAL</name>
<reference key="1">
    <citation type="journal article" date="2004" name="Proc. Natl. Acad. Sci. U.S.A.">
        <title>The diploid genome sequence of Candida albicans.</title>
        <authorList>
            <person name="Jones T."/>
            <person name="Federspiel N.A."/>
            <person name="Chibana H."/>
            <person name="Dungan J."/>
            <person name="Kalman S."/>
            <person name="Magee B.B."/>
            <person name="Newport G."/>
            <person name="Thorstenson Y.R."/>
            <person name="Agabian N."/>
            <person name="Magee P.T."/>
            <person name="Davis R.W."/>
            <person name="Scherer S."/>
        </authorList>
    </citation>
    <scope>NUCLEOTIDE SEQUENCE [LARGE SCALE GENOMIC DNA]</scope>
    <source>
        <strain>SC5314 / ATCC MYA-2876</strain>
    </source>
</reference>
<reference key="2">
    <citation type="journal article" date="2007" name="Genome Biol.">
        <title>Assembly of the Candida albicans genome into sixteen supercontigs aligned on the eight chromosomes.</title>
        <authorList>
            <person name="van het Hoog M."/>
            <person name="Rast T.J."/>
            <person name="Martchenko M."/>
            <person name="Grindle S."/>
            <person name="Dignard D."/>
            <person name="Hogues H."/>
            <person name="Cuomo C."/>
            <person name="Berriman M."/>
            <person name="Scherer S."/>
            <person name="Magee B.B."/>
            <person name="Whiteway M."/>
            <person name="Chibana H."/>
            <person name="Nantel A."/>
            <person name="Magee P.T."/>
        </authorList>
    </citation>
    <scope>GENOME REANNOTATION</scope>
    <source>
        <strain>SC5314 / ATCC MYA-2876</strain>
    </source>
</reference>
<reference key="3">
    <citation type="journal article" date="2013" name="Genome Biol.">
        <title>Assembly of a phased diploid Candida albicans genome facilitates allele-specific measurements and provides a simple model for repeat and indel structure.</title>
        <authorList>
            <person name="Muzzey D."/>
            <person name="Schwartz K."/>
            <person name="Weissman J.S."/>
            <person name="Sherlock G."/>
        </authorList>
    </citation>
    <scope>NUCLEOTIDE SEQUENCE [LARGE SCALE GENOMIC DNA]</scope>
    <scope>GENOME REANNOTATION</scope>
    <source>
        <strain>SC5314 / ATCC MYA-2876</strain>
    </source>
</reference>
<reference key="4">
    <citation type="journal article" date="2006" name="J. Biol. Chem.">
        <title>Glycosylphosphatidylinositol-anchored proteases of Candida albicans target proteins necessary for both cellular processes and host-pathogen interactions.</title>
        <authorList>
            <person name="Albrecht A."/>
            <person name="Felk A."/>
            <person name="Pichova I."/>
            <person name="Naglik J.R."/>
            <person name="Schaller M."/>
            <person name="de Groot P."/>
            <person name="Maccallum D."/>
            <person name="Odds F.C."/>
            <person name="Schafer W."/>
            <person name="Klis F."/>
            <person name="Monod M."/>
            <person name="Hube B."/>
        </authorList>
    </citation>
    <scope>GLYCOSYLATION</scope>
    <scope>SUBCELLULAR LOCATION</scope>
    <scope>FUNCTION</scope>
</reference>
<reference key="5">
    <citation type="journal article" date="2011" name="J. Biochem.">
        <title>Comprehensive characterization of secreted aspartic proteases encoded by a virulence gene family in Candida albicans.</title>
        <authorList>
            <person name="Aoki W."/>
            <person name="Kitahara N."/>
            <person name="Miura N."/>
            <person name="Morisaka H."/>
            <person name="Yamamoto Y."/>
            <person name="Kuroda K."/>
            <person name="Ueda M."/>
        </authorList>
    </citation>
    <scope>FUNCTION</scope>
    <scope>CATALYTIC ACTIVITY</scope>
    <scope>BIOPHYSICOCHEMICAL PROPERTIES</scope>
</reference>
<feature type="signal peptide" evidence="3">
    <location>
        <begin position="1"/>
        <end position="20"/>
    </location>
</feature>
<feature type="chain" id="PRO_0000424306" description="Secreted aspartic protease 10">
    <location>
        <begin position="21"/>
        <end position="429"/>
    </location>
</feature>
<feature type="propeptide" id="PRO_0000424307" description="Removed in mature form" evidence="3">
    <location>
        <begin position="430"/>
        <end position="453"/>
    </location>
</feature>
<feature type="domain" description="Peptidase A1" evidence="4">
    <location>
        <begin position="52"/>
        <end position="372"/>
    </location>
</feature>
<feature type="region of interest" description="Disordered" evidence="6">
    <location>
        <begin position="387"/>
        <end position="432"/>
    </location>
</feature>
<feature type="compositionally biased region" description="Low complexity" evidence="6">
    <location>
        <begin position="397"/>
        <end position="417"/>
    </location>
</feature>
<feature type="compositionally biased region" description="Polar residues" evidence="6">
    <location>
        <begin position="423"/>
        <end position="432"/>
    </location>
</feature>
<feature type="active site" evidence="5">
    <location>
        <position position="70"/>
    </location>
</feature>
<feature type="active site" evidence="5">
    <location>
        <position position="266"/>
    </location>
</feature>
<feature type="binding site" evidence="2">
    <location>
        <begin position="70"/>
        <end position="72"/>
    </location>
    <ligand>
        <name>pepstatin A</name>
        <dbReference type="ChEBI" id="CHEBI:190525"/>
        <note>inhibitor</note>
    </ligand>
</feature>
<feature type="binding site" evidence="2">
    <location>
        <begin position="138"/>
        <end position="139"/>
    </location>
    <ligand>
        <name>pepstatin A</name>
        <dbReference type="ChEBI" id="CHEBI:190525"/>
        <note>inhibitor</note>
    </ligand>
</feature>
<feature type="binding site" evidence="2">
    <location>
        <begin position="266"/>
        <end position="270"/>
    </location>
    <ligand>
        <name>pepstatin A</name>
        <dbReference type="ChEBI" id="CHEBI:190525"/>
        <note>inhibitor</note>
    </ligand>
</feature>
<feature type="lipid moiety-binding region" description="GPI-anchor amidated serine" evidence="3">
    <location>
        <position position="429"/>
    </location>
</feature>
<feature type="glycosylation site" description="N-linked (GlcNAc...) asparagine" evidence="3">
    <location>
        <position position="115"/>
    </location>
</feature>
<feature type="glycosylation site" description="N-linked (GlcNAc...) asparagine" evidence="3">
    <location>
        <position position="128"/>
    </location>
</feature>
<feature type="glycosylation site" description="N-linked (GlcNAc...) asparagine" evidence="3">
    <location>
        <position position="168"/>
    </location>
</feature>
<feature type="glycosylation site" description="N-linked (GlcNAc...) asparagine" evidence="3">
    <location>
        <position position="208"/>
    </location>
</feature>
<feature type="glycosylation site" description="N-linked (GlcNAc...) asparagine" evidence="3">
    <location>
        <position position="211"/>
    </location>
</feature>
<feature type="glycosylation site" description="N-linked (GlcNAc...) asparagine" evidence="3">
    <location>
        <position position="245"/>
    </location>
</feature>
<feature type="glycosylation site" description="N-linked (GlcNAc...) asparagine" evidence="3">
    <location>
        <position position="287"/>
    </location>
</feature>
<feature type="glycosylation site" description="N-linked (GlcNAc...) asparagine" evidence="3">
    <location>
        <position position="424"/>
    </location>
</feature>
<feature type="disulfide bond" evidence="1">
    <location>
        <begin position="85"/>
        <end position="112"/>
    </location>
</feature>
<feature type="disulfide bond" evidence="1">
    <location>
        <begin position="301"/>
        <end position="333"/>
    </location>
</feature>
<keyword id="KW-0064">Aspartyl protease</keyword>
<keyword id="KW-1003">Cell membrane</keyword>
<keyword id="KW-0165">Cleavage on pair of basic residues</keyword>
<keyword id="KW-1015">Disulfide bond</keyword>
<keyword id="KW-0325">Glycoprotein</keyword>
<keyword id="KW-0336">GPI-anchor</keyword>
<keyword id="KW-0378">Hydrolase</keyword>
<keyword id="KW-0449">Lipoprotein</keyword>
<keyword id="KW-0472">Membrane</keyword>
<keyword id="KW-0645">Protease</keyword>
<keyword id="KW-1185">Reference proteome</keyword>
<keyword id="KW-0677">Repeat</keyword>
<keyword id="KW-0964">Secreted</keyword>
<keyword id="KW-0732">Signal</keyword>
<keyword id="KW-0843">Virulence</keyword>
<keyword id="KW-0865">Zymogen</keyword>
<proteinExistence type="evidence at protein level"/>
<sequence>MDLVIMNFVFLLYLTSVVKCSIKLDFNKVSTPSKYTKRDALPMPLINDKILYTTELEIGSNKDKVSVSIDTGSYDLWVMSNDAVCYKVSEFQTEGAPQLPDIFNDIDQDYSCTFNGTYNSKSSKTFKNTSEDFSIGYVDGSAAQGVWGYDSVQFGQYGVTGLKIGIANRSSVSDGILGIGIANGYDNFPVLLQKQGLINKIAYSVYLNSSNSTTGTILFGAIDHAKYKGALSTVPVDSKSQLSVNVTNLKTKNGNVASGGHSILLDTGSTFSIFPDEWIDALGHSLNATYDEDESVYEIECDGYDEHFFGFSIGDSDFSVPIQDLKTEKDGQCYLAIMSNSVIGGGGILFGDDILRQIYLVYDLQDMTISVAPVVYTEDEDIEEILNPNEDQNEVPTSTSFTQSASSSGSQPSSTISGENMDKNTTSSSSGNCQTRSWIAILSALFLVYIHII</sequence>
<evidence type="ECO:0000250" key="1">
    <source>
        <dbReference type="UniProtKB" id="P0CY27"/>
    </source>
</evidence>
<evidence type="ECO:0000250" key="2">
    <source>
        <dbReference type="UniProtKB" id="P0CY29"/>
    </source>
</evidence>
<evidence type="ECO:0000255" key="3"/>
<evidence type="ECO:0000255" key="4">
    <source>
        <dbReference type="PROSITE-ProRule" id="PRU01103"/>
    </source>
</evidence>
<evidence type="ECO:0000255" key="5">
    <source>
        <dbReference type="PROSITE-ProRule" id="PRU10094"/>
    </source>
</evidence>
<evidence type="ECO:0000256" key="6">
    <source>
        <dbReference type="SAM" id="MobiDB-lite"/>
    </source>
</evidence>
<evidence type="ECO:0000269" key="7">
    <source>
    </source>
</evidence>
<evidence type="ECO:0000269" key="8">
    <source>
    </source>
</evidence>
<evidence type="ECO:0000303" key="9">
    <source>
    </source>
</evidence>
<evidence type="ECO:0000305" key="10"/>
<comment type="function">
    <text evidence="7 8">Secreted aspartic peptidases (SAPs) are a group of ten acidic hydrolases considered as key virulence factors (PubMed:16269404, PubMed:21646240). These enzymes supply the fungus with nutrient amino acids as well as are able to degrade the selected host's proteins involved in the immune defense. Required for cell surface integrity and cell separation during budding (PubMed:16269404, PubMed:21646240).</text>
</comment>
<comment type="catalytic activity">
    <reaction evidence="8">
        <text>Preferential cleavage at the carboxyl of hydrophobic amino acids, but fails to cleave 15-Leu-|-Tyr-16, 16-Tyr-|-Leu-17 and 24-Phe-|-Phe-25 of insulin B chain. Activates trypsinogen, and degrades keratin.</text>
        <dbReference type="EC" id="3.4.23.24"/>
    </reaction>
</comment>
<comment type="biophysicochemical properties">
    <phDependence>
        <text evidence="8">Optimum pH is 6.0.</text>
    </phDependence>
</comment>
<comment type="subcellular location">
    <subcellularLocation>
        <location evidence="7">Secreted</location>
    </subcellularLocation>
    <subcellularLocation>
        <location evidence="10">Cell membrane</location>
        <topology evidence="10">Lipid-anchor</topology>
        <topology evidence="10">GPI-anchor</topology>
    </subcellularLocation>
</comment>
<comment type="PTM">
    <text evidence="7">The GPI-anchor is attached to the protein in the endoplasmic reticulum and serves to target the protein to the cell surface. There, the glucosamine-inositol phospholipid moiety is cleaved off and the GPI-modified mannoprotein is covalently attached via its lipidless GPI glycan remnant to the 1,6-beta-glucan of the outer cell wall layer.</text>
</comment>
<comment type="similarity">
    <text evidence="10">Belongs to the peptidase A1 family.</text>
</comment>
<organism>
    <name type="scientific">Candida albicans (strain SC5314 / ATCC MYA-2876)</name>
    <name type="common">Yeast</name>
    <dbReference type="NCBI Taxonomy" id="237561"/>
    <lineage>
        <taxon>Eukaryota</taxon>
        <taxon>Fungi</taxon>
        <taxon>Dikarya</taxon>
        <taxon>Ascomycota</taxon>
        <taxon>Saccharomycotina</taxon>
        <taxon>Pichiomycetes</taxon>
        <taxon>Debaryomycetaceae</taxon>
        <taxon>Candida/Lodderomyces clade</taxon>
        <taxon>Candida</taxon>
    </lineage>
</organism>